<accession>P42230</accession>
<organism>
    <name type="scientific">Mus musculus</name>
    <name type="common">Mouse</name>
    <dbReference type="NCBI Taxonomy" id="10090"/>
    <lineage>
        <taxon>Eukaryota</taxon>
        <taxon>Metazoa</taxon>
        <taxon>Chordata</taxon>
        <taxon>Craniata</taxon>
        <taxon>Vertebrata</taxon>
        <taxon>Euteleostomi</taxon>
        <taxon>Mammalia</taxon>
        <taxon>Eutheria</taxon>
        <taxon>Euarchontoglires</taxon>
        <taxon>Glires</taxon>
        <taxon>Rodentia</taxon>
        <taxon>Myomorpha</taxon>
        <taxon>Muroidea</taxon>
        <taxon>Muridae</taxon>
        <taxon>Murinae</taxon>
        <taxon>Mus</taxon>
        <taxon>Mus</taxon>
    </lineage>
</organism>
<protein>
    <recommendedName>
        <fullName>Signal transducer and activator of transcription 5A</fullName>
    </recommendedName>
    <alternativeName>
        <fullName>Mammary gland factor</fullName>
    </alternativeName>
</protein>
<keyword id="KW-0002">3D-structure</keyword>
<keyword id="KW-0010">Activator</keyword>
<keyword id="KW-0963">Cytoplasm</keyword>
<keyword id="KW-0238">DNA-binding</keyword>
<keyword id="KW-0421">Lactation</keyword>
<keyword id="KW-0539">Nucleus</keyword>
<keyword id="KW-0597">Phosphoprotein</keyword>
<keyword id="KW-1185">Reference proteome</keyword>
<keyword id="KW-0727">SH2 domain</keyword>
<keyword id="KW-0804">Transcription</keyword>
<keyword id="KW-0805">Transcription regulation</keyword>
<keyword id="KW-0832">Ubl conjugation</keyword>
<evidence type="ECO:0000250" key="1"/>
<evidence type="ECO:0000250" key="2">
    <source>
        <dbReference type="UniProtKB" id="P40763"/>
    </source>
</evidence>
<evidence type="ECO:0000250" key="3">
    <source>
        <dbReference type="UniProtKB" id="P42229"/>
    </source>
</evidence>
<evidence type="ECO:0000250" key="4">
    <source>
        <dbReference type="UniProtKB" id="Q62771"/>
    </source>
</evidence>
<evidence type="ECO:0000255" key="5">
    <source>
        <dbReference type="PROSITE-ProRule" id="PRU00191"/>
    </source>
</evidence>
<evidence type="ECO:0000269" key="6">
    <source>
    </source>
</evidence>
<evidence type="ECO:0000269" key="7">
    <source>
    </source>
</evidence>
<evidence type="ECO:0000269" key="8">
    <source>
    </source>
</evidence>
<evidence type="ECO:0000269" key="9">
    <source>
    </source>
</evidence>
<evidence type="ECO:0000269" key="10">
    <source>
    </source>
</evidence>
<evidence type="ECO:0000269" key="11">
    <source>
    </source>
</evidence>
<evidence type="ECO:0000269" key="12">
    <source>
    </source>
</evidence>
<evidence type="ECO:0000269" key="13">
    <source>
    </source>
</evidence>
<evidence type="ECO:0000269" key="14">
    <source>
    </source>
</evidence>
<evidence type="ECO:0000305" key="15"/>
<evidence type="ECO:0007744" key="16">
    <source>
    </source>
</evidence>
<evidence type="ECO:0007829" key="17">
    <source>
        <dbReference type="PDB" id="1Y1U"/>
    </source>
</evidence>
<sequence length="793" mass="90831">MAGWIQAQQLQGDALRQMQVLYGQHFPIEVRHYLAQWIESQPWDAIDLDNPQDRGQATQLLEGLVQELQKKAEHQVGEDGFLLKIKLGHYATQLQNTYDRCPMELVRCIRHILYNEQRLVREANNCSSPAGVLVDAMSQKHLQINQRFEELRLITQDTENELKKLQQTQEYFIIQYQESLRIQAQFAQLGQLNPQERMSRETALQQKQVSLETWLQREAQTLQQYRVELAEKHQKTLQLLRKQQTIILDDELIQWKRRQQLAGNGGPPEGSLDVLQSWCEKLAEIIWQNRQQIRRAEHLCQQLPIPGPVEEMLAEVNATITDIISALVTSTFIIEKQPPQVLKTQTKFAATVRLLVGGKLNVHMNPPQVKATIISEQQAKSLLKNENTRNECSGEILNNCCVMEYHQATGTLSAHFRNMSLKRIKRADRRGAESVTEEKFTVLFESQFSVGSNELVFQVKTLSLPVVVIVHGSQDHNATATVLWDNAFAEPGRVPFAVPDKVLWPQLCEALNMKFKAEVQSNRGLTKENLVFLAQKLFNISSNHLEDYNSMSVSWSQFNRENLPGWNYTFWQWFDGVMEVLKKHHKPHWNDGAILGFVNKQQAHDLLINKPDGTFLLRFSDSEIGGITIAWKFDSPDRNLWNLKPFTTRDFSIRSLADRLGDLNYLIYVFPDRPKDEVFAKYYTPVLAKAVDGYVKPQIKQVVPEFVNASTDAGASATYMDQAPSPVVCPQPHYNMYPPNPDPVLDQDGEFDLDESMDVARHVEELLRRPMDSLDARLSPPAGLFTSARSSLS</sequence>
<name>STA5A_MOUSE</name>
<comment type="function">
    <text evidence="6 8 13">Carries out a dual function: signal transduction and activation of transcription. Mediates cellular responses to the cytokine KITLG/SCF and other growth factors. May mediate cellular responses to activated FGFR1, FGFR2, FGFR3 and FGFR4. Binds to the GAS element and activates PRL-induced transcription. Regulates the expression of milk proteins during lactation.</text>
</comment>
<comment type="subunit">
    <text evidence="1 3 6 8 9 14">Forms a homodimer or a heterodimer with a related family member. Interacts with NCOA1 and SOCS7 (By similarity). Binds NR3C1 (PubMed:9528750). Interacts with ERBB4 (PubMed:10508857, PubMed:16837552). Interacts with EBF4 (By similarity). Interacts with CD69 (PubMed:20696842).</text>
</comment>
<comment type="interaction">
    <interactant intactId="EBI-617434">
        <id>P42230</id>
    </interactant>
    <interactant intactId="EBI-7737644">
        <id>Q99490-2</id>
        <label>AGAP2</label>
    </interactant>
    <organismsDiffer>true</organismsDiffer>
    <experiments>2</experiments>
</comment>
<comment type="interaction">
    <interactant intactId="EBI-617434">
        <id>P42230</id>
    </interactant>
    <interactant intactId="EBI-7526279">
        <id>P19941</id>
        <label>GHR</label>
    </interactant>
    <organismsDiffer>true</organismsDiffer>
    <experiments>3</experiments>
</comment>
<comment type="subcellular location">
    <subcellularLocation>
        <location evidence="8">Cytoplasm</location>
    </subcellularLocation>
    <subcellularLocation>
        <location evidence="8">Nucleus</location>
    </subcellularLocation>
    <text>Translocated into the nucleus in response to phosphorylation.</text>
</comment>
<comment type="tissue specificity">
    <text>In the virgin, found in most tissues except brain and muscle. During lactation, abundantly found in mammary tissue, as well as in other secretory organs such as salivary gland and seminal vesicle.</text>
</comment>
<comment type="PTM">
    <text evidence="12">ISGylated.</text>
</comment>
<comment type="PTM">
    <text evidence="2 3 4 7 8 10 11 13">Tyrosine phosphorylated in response to KITLG/SCF, IL2, IL3, IL7, IL15, CSF2/GMCSF, GH1, PRL, EPO and THPO (PubMed:16837552). Activated KIT promotes phosphorylation on tyrosine residues and subsequent translocation to the nucleus (PubMed:21135090). Tyrosine phosphorylated in response to constitutively activated FGFR1, FGFR2, FGFR3 and FGFR4 (By similarity). Tyrosine phosphorylation is required for DNA-binding activity and dimerization (PubMed:7720707). Serine phosphorylation is also required for maximal transcriptional activity (By similarity). Tyrosine phosphorylated in response to signaling via activated FLT3; wild-type FLT3 results in much weaker phosphorylation than constitutively activated mutant FLT3 (PubMed:11090077, PubMed:21262971). Alternatively, can be phosphorylated by JAK2 at Tyr-694 (By similarity).</text>
</comment>
<comment type="similarity">
    <text evidence="15">Belongs to the transcription factor STAT family.</text>
</comment>
<dbReference type="EMBL" id="Z48538">
    <property type="protein sequence ID" value="CAA88419.1"/>
    <property type="molecule type" value="mRNA"/>
</dbReference>
<dbReference type="EMBL" id="U21103">
    <property type="protein sequence ID" value="AAA80590.1"/>
    <property type="molecule type" value="mRNA"/>
</dbReference>
<dbReference type="EMBL" id="U36502">
    <property type="protein sequence ID" value="AAA78945.1"/>
    <property type="molecule type" value="mRNA"/>
</dbReference>
<dbReference type="CCDS" id="CCDS25439.1"/>
<dbReference type="PIR" id="S54772">
    <property type="entry name" value="S54772"/>
</dbReference>
<dbReference type="RefSeq" id="NP_001349609.1">
    <property type="nucleotide sequence ID" value="NM_001362680.1"/>
</dbReference>
<dbReference type="RefSeq" id="NP_001412353.1">
    <property type="nucleotide sequence ID" value="NM_001425424.1"/>
</dbReference>
<dbReference type="RefSeq" id="NP_001412354.1">
    <property type="nucleotide sequence ID" value="NM_001425425.1"/>
</dbReference>
<dbReference type="RefSeq" id="NP_035618.1">
    <property type="nucleotide sequence ID" value="NM_011488.3"/>
</dbReference>
<dbReference type="RefSeq" id="XP_006532784.1">
    <property type="nucleotide sequence ID" value="XM_006532721.1"/>
</dbReference>
<dbReference type="RefSeq" id="XP_006532785.1">
    <property type="nucleotide sequence ID" value="XM_006532722.1"/>
</dbReference>
<dbReference type="RefSeq" id="XP_017169891.1">
    <property type="nucleotide sequence ID" value="XM_017314402.1"/>
</dbReference>
<dbReference type="PDB" id="1Y1U">
    <property type="method" value="X-ray"/>
    <property type="resolution" value="3.21 A"/>
    <property type="chains" value="A/B/C=128-712"/>
</dbReference>
<dbReference type="PDBsum" id="1Y1U"/>
<dbReference type="SMR" id="P42230"/>
<dbReference type="BioGRID" id="203525">
    <property type="interactions" value="15"/>
</dbReference>
<dbReference type="CORUM" id="P42230"/>
<dbReference type="DIP" id="DIP-897N"/>
<dbReference type="FunCoup" id="P42230">
    <property type="interactions" value="2982"/>
</dbReference>
<dbReference type="IntAct" id="P42230">
    <property type="interactions" value="7"/>
</dbReference>
<dbReference type="MINT" id="P42230"/>
<dbReference type="ChEMBL" id="CHEMBL5513"/>
<dbReference type="GlyGen" id="P42230">
    <property type="glycosylation" value="2 sites, 1 O-linked glycan (2 sites)"/>
</dbReference>
<dbReference type="iPTMnet" id="P42230"/>
<dbReference type="PhosphoSitePlus" id="P42230"/>
<dbReference type="SwissPalm" id="P42230"/>
<dbReference type="jPOST" id="P42230"/>
<dbReference type="PaxDb" id="10090-ENSMUSP00000004145"/>
<dbReference type="PeptideAtlas" id="P42230"/>
<dbReference type="ProteomicsDB" id="257443"/>
<dbReference type="Pumba" id="P42230"/>
<dbReference type="Antibodypedia" id="3553">
    <property type="antibodies" value="1812 antibodies from 53 providers"/>
</dbReference>
<dbReference type="DNASU" id="20850"/>
<dbReference type="Ensembl" id="ENSMUST00000004145.14">
    <property type="protein sequence ID" value="ENSMUSP00000004145.8"/>
    <property type="gene ID" value="ENSMUSG00000004043.15"/>
</dbReference>
<dbReference type="Ensembl" id="ENSMUST00000107356.8">
    <property type="protein sequence ID" value="ENSMUSP00000102979.2"/>
    <property type="gene ID" value="ENSMUSG00000004043.15"/>
</dbReference>
<dbReference type="GeneID" id="20850"/>
<dbReference type="KEGG" id="mmu:20850"/>
<dbReference type="UCSC" id="uc007lml.2">
    <property type="organism name" value="mouse"/>
</dbReference>
<dbReference type="AGR" id="MGI:103036"/>
<dbReference type="CTD" id="6776"/>
<dbReference type="MGI" id="MGI:103036">
    <property type="gene designation" value="Stat5a"/>
</dbReference>
<dbReference type="VEuPathDB" id="HostDB:ENSMUSG00000004043"/>
<dbReference type="eggNOG" id="KOG3667">
    <property type="taxonomic scope" value="Eukaryota"/>
</dbReference>
<dbReference type="GeneTree" id="ENSGT01080000257420"/>
<dbReference type="HOGENOM" id="CLU_014189_2_2_1"/>
<dbReference type="InParanoid" id="P42230"/>
<dbReference type="OMA" id="FDWKNRQ"/>
<dbReference type="OrthoDB" id="19300at2759"/>
<dbReference type="TreeFam" id="TF318648"/>
<dbReference type="Reactome" id="R-MMU-1251985">
    <property type="pathway name" value="Nuclear signaling by ERBB4"/>
</dbReference>
<dbReference type="Reactome" id="R-MMU-1266695">
    <property type="pathway name" value="Interleukin-7 signaling"/>
</dbReference>
<dbReference type="Reactome" id="R-MMU-1433557">
    <property type="pathway name" value="Signaling by SCF-KIT"/>
</dbReference>
<dbReference type="Reactome" id="R-MMU-186763">
    <property type="pathway name" value="Downstream signal transduction"/>
</dbReference>
<dbReference type="Reactome" id="R-MMU-512988">
    <property type="pathway name" value="Interleukin-3, Interleukin-5 and GM-CSF signaling"/>
</dbReference>
<dbReference type="Reactome" id="R-MMU-8854691">
    <property type="pathway name" value="Interleukin-20 family signaling"/>
</dbReference>
<dbReference type="Reactome" id="R-MMU-8983432">
    <property type="pathway name" value="Interleukin-15 signaling"/>
</dbReference>
<dbReference type="Reactome" id="R-MMU-8985947">
    <property type="pathway name" value="Interleukin-9 signaling"/>
</dbReference>
<dbReference type="Reactome" id="R-MMU-9020558">
    <property type="pathway name" value="Interleukin-2 signaling"/>
</dbReference>
<dbReference type="Reactome" id="R-MMU-9020958">
    <property type="pathway name" value="Interleukin-21 signaling"/>
</dbReference>
<dbReference type="Reactome" id="R-MMU-982772">
    <property type="pathway name" value="Growth hormone receptor signaling"/>
</dbReference>
<dbReference type="BioGRID-ORCS" id="20850">
    <property type="hits" value="6 hits in 84 CRISPR screens"/>
</dbReference>
<dbReference type="ChiTaRS" id="Stat5a">
    <property type="organism name" value="mouse"/>
</dbReference>
<dbReference type="EvolutionaryTrace" id="P42230"/>
<dbReference type="PRO" id="PR:P42230"/>
<dbReference type="Proteomes" id="UP000000589">
    <property type="component" value="Chromosome 11"/>
</dbReference>
<dbReference type="RNAct" id="P42230">
    <property type="molecule type" value="protein"/>
</dbReference>
<dbReference type="Bgee" id="ENSMUSG00000004043">
    <property type="expression patterns" value="Expressed in thoracic mammary gland and 171 other cell types or tissues"/>
</dbReference>
<dbReference type="ExpressionAtlas" id="P42230">
    <property type="expression patterns" value="baseline and differential"/>
</dbReference>
<dbReference type="GO" id="GO:0005737">
    <property type="term" value="C:cytoplasm"/>
    <property type="evidence" value="ECO:0000314"/>
    <property type="project" value="MGI"/>
</dbReference>
<dbReference type="GO" id="GO:0005829">
    <property type="term" value="C:cytosol"/>
    <property type="evidence" value="ECO:0000304"/>
    <property type="project" value="Reactome"/>
</dbReference>
<dbReference type="GO" id="GO:0005654">
    <property type="term" value="C:nucleoplasm"/>
    <property type="evidence" value="ECO:0000304"/>
    <property type="project" value="Reactome"/>
</dbReference>
<dbReference type="GO" id="GO:0005634">
    <property type="term" value="C:nucleus"/>
    <property type="evidence" value="ECO:0000314"/>
    <property type="project" value="UniProtKB"/>
</dbReference>
<dbReference type="GO" id="GO:0003677">
    <property type="term" value="F:DNA binding"/>
    <property type="evidence" value="ECO:0000314"/>
    <property type="project" value="MGI"/>
</dbReference>
<dbReference type="GO" id="GO:0001228">
    <property type="term" value="F:DNA-binding transcription activator activity, RNA polymerase II-specific"/>
    <property type="evidence" value="ECO:0000314"/>
    <property type="project" value="NTNU_SB"/>
</dbReference>
<dbReference type="GO" id="GO:0140297">
    <property type="term" value="F:DNA-binding transcription factor binding"/>
    <property type="evidence" value="ECO:0007669"/>
    <property type="project" value="Ensembl"/>
</dbReference>
<dbReference type="GO" id="GO:0042301">
    <property type="term" value="F:phosphate ion binding"/>
    <property type="evidence" value="ECO:0000314"/>
    <property type="project" value="ARUK-UCL"/>
</dbReference>
<dbReference type="GO" id="GO:0000978">
    <property type="term" value="F:RNA polymerase II cis-regulatory region sequence-specific DNA binding"/>
    <property type="evidence" value="ECO:0000314"/>
    <property type="project" value="MGI"/>
</dbReference>
<dbReference type="GO" id="GO:0043565">
    <property type="term" value="F:sequence-specific DNA binding"/>
    <property type="evidence" value="ECO:0000314"/>
    <property type="project" value="NTNU_SB"/>
</dbReference>
<dbReference type="GO" id="GO:0050798">
    <property type="term" value="P:activated T cell proliferation"/>
    <property type="evidence" value="ECO:0000314"/>
    <property type="project" value="MGI"/>
</dbReference>
<dbReference type="GO" id="GO:0030183">
    <property type="term" value="P:B cell differentiation"/>
    <property type="evidence" value="ECO:0000316"/>
    <property type="project" value="MGI"/>
</dbReference>
<dbReference type="GO" id="GO:0008283">
    <property type="term" value="P:cell population proliferation"/>
    <property type="evidence" value="ECO:0000314"/>
    <property type="project" value="MGI"/>
</dbReference>
<dbReference type="GO" id="GO:0007259">
    <property type="term" value="P:cell surface receptor signaling pathway via JAK-STAT"/>
    <property type="evidence" value="ECO:0000314"/>
    <property type="project" value="MGI"/>
</dbReference>
<dbReference type="GO" id="GO:0071345">
    <property type="term" value="P:cellular response to cytokine stimulus"/>
    <property type="evidence" value="ECO:0000266"/>
    <property type="project" value="MGI"/>
</dbReference>
<dbReference type="GO" id="GO:0097011">
    <property type="term" value="P:cellular response to granulocyte macrophage colony-stimulating factor stimulus"/>
    <property type="evidence" value="ECO:0000314"/>
    <property type="project" value="MGI"/>
</dbReference>
<dbReference type="GO" id="GO:0019221">
    <property type="term" value="P:cytokine-mediated signaling pathway"/>
    <property type="evidence" value="ECO:0000314"/>
    <property type="project" value="MGI"/>
</dbReference>
<dbReference type="GO" id="GO:0046543">
    <property type="term" value="P:development of secondary female sexual characteristics"/>
    <property type="evidence" value="ECO:0000315"/>
    <property type="project" value="MGI"/>
</dbReference>
<dbReference type="GO" id="GO:0046544">
    <property type="term" value="P:development of secondary male sexual characteristics"/>
    <property type="evidence" value="ECO:0000315"/>
    <property type="project" value="MGI"/>
</dbReference>
<dbReference type="GO" id="GO:0030222">
    <property type="term" value="P:eosinophil differentiation"/>
    <property type="evidence" value="ECO:0007669"/>
    <property type="project" value="Ensembl"/>
</dbReference>
<dbReference type="GO" id="GO:0060742">
    <property type="term" value="P:epithelial cell differentiation involved in prostate gland development"/>
    <property type="evidence" value="ECO:0000315"/>
    <property type="project" value="MGI"/>
</dbReference>
<dbReference type="GO" id="GO:0030218">
    <property type="term" value="P:erythrocyte differentiation"/>
    <property type="evidence" value="ECO:0000316"/>
    <property type="project" value="MGI"/>
</dbReference>
<dbReference type="GO" id="GO:0007565">
    <property type="term" value="P:female pregnancy"/>
    <property type="evidence" value="ECO:0000316"/>
    <property type="project" value="MGI"/>
</dbReference>
<dbReference type="GO" id="GO:0042492">
    <property type="term" value="P:gamma-delta T cell differentiation"/>
    <property type="evidence" value="ECO:0000316"/>
    <property type="project" value="MGI"/>
</dbReference>
<dbReference type="GO" id="GO:0060397">
    <property type="term" value="P:growth hormone receptor signaling pathway via JAK-STAT"/>
    <property type="evidence" value="ECO:0000314"/>
    <property type="project" value="BHF-UCL"/>
</dbReference>
<dbReference type="GO" id="GO:0035723">
    <property type="term" value="P:interleukin-15-mediated signaling pathway"/>
    <property type="evidence" value="ECO:0007669"/>
    <property type="project" value="Ensembl"/>
</dbReference>
<dbReference type="GO" id="GO:0038110">
    <property type="term" value="P:interleukin-2-mediated signaling pathway"/>
    <property type="evidence" value="ECO:0007669"/>
    <property type="project" value="Ensembl"/>
</dbReference>
<dbReference type="GO" id="GO:0038156">
    <property type="term" value="P:interleukin-3-mediated signaling pathway"/>
    <property type="evidence" value="ECO:0007669"/>
    <property type="project" value="Ensembl"/>
</dbReference>
<dbReference type="GO" id="GO:0035771">
    <property type="term" value="P:interleukin-4-mediated signaling pathway"/>
    <property type="evidence" value="ECO:0007669"/>
    <property type="project" value="Ensembl"/>
</dbReference>
<dbReference type="GO" id="GO:0038043">
    <property type="term" value="P:interleukin-5-mediated signaling pathway"/>
    <property type="evidence" value="ECO:0007669"/>
    <property type="project" value="Ensembl"/>
</dbReference>
<dbReference type="GO" id="GO:0038111">
    <property type="term" value="P:interleukin-7-mediated signaling pathway"/>
    <property type="evidence" value="ECO:0007669"/>
    <property type="project" value="Ensembl"/>
</dbReference>
<dbReference type="GO" id="GO:0038113">
    <property type="term" value="P:interleukin-9-mediated signaling pathway"/>
    <property type="evidence" value="ECO:0007669"/>
    <property type="project" value="Ensembl"/>
</dbReference>
<dbReference type="GO" id="GO:0007595">
    <property type="term" value="P:lactation"/>
    <property type="evidence" value="ECO:0000315"/>
    <property type="project" value="MGI"/>
</dbReference>
<dbReference type="GO" id="GO:0019915">
    <property type="term" value="P:lipid storage"/>
    <property type="evidence" value="ECO:0000316"/>
    <property type="project" value="MGI"/>
</dbReference>
<dbReference type="GO" id="GO:0001553">
    <property type="term" value="P:luteinization"/>
    <property type="evidence" value="ECO:0000316"/>
    <property type="project" value="MGI"/>
</dbReference>
<dbReference type="GO" id="GO:0030098">
    <property type="term" value="P:lymphocyte differentiation"/>
    <property type="evidence" value="ECO:0000316"/>
    <property type="project" value="MGI"/>
</dbReference>
<dbReference type="GO" id="GO:0030879">
    <property type="term" value="P:mammary gland development"/>
    <property type="evidence" value="ECO:0000315"/>
    <property type="project" value="MGI"/>
</dbReference>
<dbReference type="GO" id="GO:0061180">
    <property type="term" value="P:mammary gland epithelium development"/>
    <property type="evidence" value="ECO:0000315"/>
    <property type="project" value="MGI"/>
</dbReference>
<dbReference type="GO" id="GO:0033024">
    <property type="term" value="P:mast cell apoptotic process"/>
    <property type="evidence" value="ECO:0000315"/>
    <property type="project" value="MGI"/>
</dbReference>
<dbReference type="GO" id="GO:0060374">
    <property type="term" value="P:mast cell differentiation"/>
    <property type="evidence" value="ECO:0000315"/>
    <property type="project" value="MGI"/>
</dbReference>
<dbReference type="GO" id="GO:0070662">
    <property type="term" value="P:mast cell proliferation"/>
    <property type="evidence" value="ECO:0000315"/>
    <property type="project" value="MGI"/>
</dbReference>
<dbReference type="GO" id="GO:0000278">
    <property type="term" value="P:mitotic cell cycle"/>
    <property type="evidence" value="ECO:0000316"/>
    <property type="project" value="MGI"/>
</dbReference>
<dbReference type="GO" id="GO:0033028">
    <property type="term" value="P:myeloid cell apoptotic process"/>
    <property type="evidence" value="ECO:0000316"/>
    <property type="project" value="MGI"/>
</dbReference>
<dbReference type="GO" id="GO:0001779">
    <property type="term" value="P:natural killer cell differentiation"/>
    <property type="evidence" value="ECO:0000315"/>
    <property type="project" value="MGI"/>
</dbReference>
<dbReference type="GO" id="GO:0042267">
    <property type="term" value="P:natural killer cell mediated cytotoxicity"/>
    <property type="evidence" value="ECO:0000315"/>
    <property type="project" value="MGI"/>
</dbReference>
<dbReference type="GO" id="GO:0045647">
    <property type="term" value="P:negative regulation of erythrocyte differentiation"/>
    <property type="evidence" value="ECO:0000316"/>
    <property type="project" value="MGI"/>
</dbReference>
<dbReference type="GO" id="GO:0033026">
    <property type="term" value="P:negative regulation of mast cell apoptotic process"/>
    <property type="evidence" value="ECO:0000315"/>
    <property type="project" value="MGI"/>
</dbReference>
<dbReference type="GO" id="GO:0033033">
    <property type="term" value="P:negative regulation of myeloid cell apoptotic process"/>
    <property type="evidence" value="ECO:0000316"/>
    <property type="project" value="MGI"/>
</dbReference>
<dbReference type="GO" id="GO:2000329">
    <property type="term" value="P:negative regulation of T-helper 17 cell lineage commitment"/>
    <property type="evidence" value="ECO:0007669"/>
    <property type="project" value="Ensembl"/>
</dbReference>
<dbReference type="GO" id="GO:0048541">
    <property type="term" value="P:Peyer's patch development"/>
    <property type="evidence" value="ECO:0000316"/>
    <property type="project" value="MGI"/>
</dbReference>
<dbReference type="GO" id="GO:0042104">
    <property type="term" value="P:positive regulation of activated T cell proliferation"/>
    <property type="evidence" value="ECO:0000314"/>
    <property type="project" value="MGI"/>
</dbReference>
<dbReference type="GO" id="GO:0045579">
    <property type="term" value="P:positive regulation of B cell differentiation"/>
    <property type="evidence" value="ECO:0000316"/>
    <property type="project" value="MGI"/>
</dbReference>
<dbReference type="GO" id="GO:0043536">
    <property type="term" value="P:positive regulation of blood vessel endothelial cell migration"/>
    <property type="evidence" value="ECO:0007669"/>
    <property type="project" value="Ensembl"/>
</dbReference>
<dbReference type="GO" id="GO:0008284">
    <property type="term" value="P:positive regulation of cell population proliferation"/>
    <property type="evidence" value="ECO:0000314"/>
    <property type="project" value="MGI"/>
</dbReference>
<dbReference type="GO" id="GO:0001938">
    <property type="term" value="P:positive regulation of endothelial cell proliferation"/>
    <property type="evidence" value="ECO:0007669"/>
    <property type="project" value="Ensembl"/>
</dbReference>
<dbReference type="GO" id="GO:0045588">
    <property type="term" value="P:positive regulation of gamma-delta T cell differentiation"/>
    <property type="evidence" value="ECO:0000316"/>
    <property type="project" value="MGI"/>
</dbReference>
<dbReference type="GO" id="GO:0050729">
    <property type="term" value="P:positive regulation of inflammatory response"/>
    <property type="evidence" value="ECO:0000316"/>
    <property type="project" value="MGI"/>
</dbReference>
<dbReference type="GO" id="GO:0032743">
    <property type="term" value="P:positive regulation of interleukin-2 production"/>
    <property type="evidence" value="ECO:0000316"/>
    <property type="project" value="MGI"/>
</dbReference>
<dbReference type="GO" id="GO:0045621">
    <property type="term" value="P:positive regulation of lymphocyte differentiation"/>
    <property type="evidence" value="ECO:0000316"/>
    <property type="project" value="MGI"/>
</dbReference>
<dbReference type="GO" id="GO:0060376">
    <property type="term" value="P:positive regulation of mast cell differentiation"/>
    <property type="evidence" value="ECO:0000315"/>
    <property type="project" value="MGI"/>
</dbReference>
<dbReference type="GO" id="GO:0070668">
    <property type="term" value="P:positive regulation of mast cell proliferation"/>
    <property type="evidence" value="ECO:0000315"/>
    <property type="project" value="MGI"/>
</dbReference>
<dbReference type="GO" id="GO:0045931">
    <property type="term" value="P:positive regulation of mitotic cell cycle"/>
    <property type="evidence" value="ECO:0000316"/>
    <property type="project" value="MGI"/>
</dbReference>
<dbReference type="GO" id="GO:0040018">
    <property type="term" value="P:positive regulation of multicellular organism growth"/>
    <property type="evidence" value="ECO:0000316"/>
    <property type="project" value="MGI"/>
</dbReference>
<dbReference type="GO" id="GO:0032825">
    <property type="term" value="P:positive regulation of natural killer cell differentiation"/>
    <property type="evidence" value="ECO:0000315"/>
    <property type="project" value="MGI"/>
</dbReference>
<dbReference type="GO" id="GO:0045954">
    <property type="term" value="P:positive regulation of natural killer cell mediated cytotoxicity"/>
    <property type="evidence" value="ECO:0000315"/>
    <property type="project" value="MGI"/>
</dbReference>
<dbReference type="GO" id="GO:0042102">
    <property type="term" value="P:positive regulation of T cell proliferation"/>
    <property type="evidence" value="ECO:0000315"/>
    <property type="project" value="MGI"/>
</dbReference>
<dbReference type="GO" id="GO:0045944">
    <property type="term" value="P:positive regulation of transcription by RNA polymerase II"/>
    <property type="evidence" value="ECO:0000314"/>
    <property type="project" value="MGI"/>
</dbReference>
<dbReference type="GO" id="GO:0060740">
    <property type="term" value="P:prostate gland epithelium morphogenesis"/>
    <property type="evidence" value="ECO:0000315"/>
    <property type="project" value="MGI"/>
</dbReference>
<dbReference type="GO" id="GO:0038026">
    <property type="term" value="P:reelin-mediated signaling pathway"/>
    <property type="evidence" value="ECO:0000266"/>
    <property type="project" value="MGI"/>
</dbReference>
<dbReference type="GO" id="GO:0030155">
    <property type="term" value="P:regulation of cell adhesion"/>
    <property type="evidence" value="ECO:0000315"/>
    <property type="project" value="MGI"/>
</dbReference>
<dbReference type="GO" id="GO:0030856">
    <property type="term" value="P:regulation of epithelial cell differentiation"/>
    <property type="evidence" value="ECO:0000315"/>
    <property type="project" value="MGI"/>
</dbReference>
<dbReference type="GO" id="GO:0040014">
    <property type="term" value="P:regulation of multicellular organism growth"/>
    <property type="evidence" value="ECO:0000316"/>
    <property type="project" value="BHF-UCL"/>
</dbReference>
<dbReference type="GO" id="GO:0019218">
    <property type="term" value="P:regulation of steroid metabolic process"/>
    <property type="evidence" value="ECO:0000316"/>
    <property type="project" value="MGI"/>
</dbReference>
<dbReference type="GO" id="GO:0006357">
    <property type="term" value="P:regulation of transcription by RNA polymerase II"/>
    <property type="evidence" value="ECO:0000314"/>
    <property type="project" value="MGI"/>
</dbReference>
<dbReference type="GO" id="GO:0043434">
    <property type="term" value="P:response to peptide hormone"/>
    <property type="evidence" value="ECO:0000314"/>
    <property type="project" value="MGI"/>
</dbReference>
<dbReference type="GO" id="GO:0033077">
    <property type="term" value="P:T cell differentiation in thymus"/>
    <property type="evidence" value="ECO:0000316"/>
    <property type="project" value="MGI"/>
</dbReference>
<dbReference type="GO" id="GO:0043029">
    <property type="term" value="P:T cell homeostasis"/>
    <property type="evidence" value="ECO:0000316"/>
    <property type="project" value="MGI"/>
</dbReference>
<dbReference type="GO" id="GO:0042098">
    <property type="term" value="P:T cell proliferation"/>
    <property type="evidence" value="ECO:0000315"/>
    <property type="project" value="MGI"/>
</dbReference>
<dbReference type="GO" id="GO:0019530">
    <property type="term" value="P:taurine metabolic process"/>
    <property type="evidence" value="ECO:0000316"/>
    <property type="project" value="BHF-UCL"/>
</dbReference>
<dbReference type="GO" id="GO:0038163">
    <property type="term" value="P:thrombopoietin-mediated signaling pathway"/>
    <property type="evidence" value="ECO:0007669"/>
    <property type="project" value="Ensembl"/>
</dbReference>
<dbReference type="GO" id="GO:0006366">
    <property type="term" value="P:transcription by RNA polymerase II"/>
    <property type="evidence" value="ECO:0000315"/>
    <property type="project" value="MGI"/>
</dbReference>
<dbReference type="CDD" id="cd10421">
    <property type="entry name" value="SH2_STAT5a"/>
    <property type="match status" value="1"/>
</dbReference>
<dbReference type="CDD" id="cd16855">
    <property type="entry name" value="STAT5_CCD"/>
    <property type="match status" value="1"/>
</dbReference>
<dbReference type="CDD" id="cd16849">
    <property type="entry name" value="STAT5_DBD"/>
    <property type="match status" value="1"/>
</dbReference>
<dbReference type="FunFam" id="1.10.532.10:FF:000002">
    <property type="entry name" value="Signal transducer and activator of transcription"/>
    <property type="match status" value="1"/>
</dbReference>
<dbReference type="FunFam" id="1.20.1050.20:FF:000002">
    <property type="entry name" value="Signal transducer and activator of transcription"/>
    <property type="match status" value="1"/>
</dbReference>
<dbReference type="FunFam" id="2.60.40.630:FF:000002">
    <property type="entry name" value="Signal transducer and activator of transcription"/>
    <property type="match status" value="1"/>
</dbReference>
<dbReference type="FunFam" id="3.30.505.10:FF:000025">
    <property type="entry name" value="Signal transducer and activator of transcription"/>
    <property type="match status" value="1"/>
</dbReference>
<dbReference type="FunFam" id="1.10.238.10:FF:000029">
    <property type="entry name" value="Signal transducer and transcription activator 6"/>
    <property type="match status" value="1"/>
</dbReference>
<dbReference type="Gene3D" id="1.10.238.10">
    <property type="entry name" value="EF-hand"/>
    <property type="match status" value="1"/>
</dbReference>
<dbReference type="Gene3D" id="3.30.505.10">
    <property type="entry name" value="SH2 domain"/>
    <property type="match status" value="1"/>
</dbReference>
<dbReference type="Gene3D" id="1.20.1050.20">
    <property type="entry name" value="STAT transcription factor, all-alpha domain"/>
    <property type="match status" value="1"/>
</dbReference>
<dbReference type="Gene3D" id="2.60.40.630">
    <property type="entry name" value="STAT transcription factor, DNA-binding domain"/>
    <property type="match status" value="1"/>
</dbReference>
<dbReference type="Gene3D" id="1.10.532.10">
    <property type="entry name" value="STAT transcription factor, N-terminal domain"/>
    <property type="match status" value="1"/>
</dbReference>
<dbReference type="IDEAL" id="IID50279"/>
<dbReference type="InterPro" id="IPR008967">
    <property type="entry name" value="p53-like_TF_DNA-bd_sf"/>
</dbReference>
<dbReference type="InterPro" id="IPR000980">
    <property type="entry name" value="SH2"/>
</dbReference>
<dbReference type="InterPro" id="IPR036860">
    <property type="entry name" value="SH2_dom_sf"/>
</dbReference>
<dbReference type="InterPro" id="IPR001217">
    <property type="entry name" value="STAT"/>
</dbReference>
<dbReference type="InterPro" id="IPR046994">
    <property type="entry name" value="STAT5_CCD"/>
</dbReference>
<dbReference type="InterPro" id="IPR035858">
    <property type="entry name" value="STAT5a/5b_DBD"/>
</dbReference>
<dbReference type="InterPro" id="IPR048988">
    <property type="entry name" value="STAT_linker"/>
</dbReference>
<dbReference type="InterPro" id="IPR036535">
    <property type="entry name" value="STAT_N_sf"/>
</dbReference>
<dbReference type="InterPro" id="IPR013800">
    <property type="entry name" value="STAT_TF_alpha"/>
</dbReference>
<dbReference type="InterPro" id="IPR015988">
    <property type="entry name" value="STAT_TF_coiled-coil"/>
</dbReference>
<dbReference type="InterPro" id="IPR013801">
    <property type="entry name" value="STAT_TF_DNA-bd"/>
</dbReference>
<dbReference type="InterPro" id="IPR012345">
    <property type="entry name" value="STAT_TF_DNA-bd_N"/>
</dbReference>
<dbReference type="InterPro" id="IPR013799">
    <property type="entry name" value="STAT_TF_prot_interaction"/>
</dbReference>
<dbReference type="PANTHER" id="PTHR11801">
    <property type="entry name" value="SIGNAL TRANSDUCER AND ACTIVATOR OF TRANSCRIPTION"/>
    <property type="match status" value="1"/>
</dbReference>
<dbReference type="Pfam" id="PF00017">
    <property type="entry name" value="SH2"/>
    <property type="match status" value="1"/>
</dbReference>
<dbReference type="Pfam" id="PF01017">
    <property type="entry name" value="STAT_alpha"/>
    <property type="match status" value="1"/>
</dbReference>
<dbReference type="Pfam" id="PF02864">
    <property type="entry name" value="STAT_bind"/>
    <property type="match status" value="1"/>
</dbReference>
<dbReference type="Pfam" id="PF02865">
    <property type="entry name" value="STAT_int"/>
    <property type="match status" value="1"/>
</dbReference>
<dbReference type="Pfam" id="PF21354">
    <property type="entry name" value="STAT_linker"/>
    <property type="match status" value="1"/>
</dbReference>
<dbReference type="SMART" id="SM00252">
    <property type="entry name" value="SH2"/>
    <property type="match status" value="1"/>
</dbReference>
<dbReference type="SMART" id="SM00964">
    <property type="entry name" value="STAT_int"/>
    <property type="match status" value="1"/>
</dbReference>
<dbReference type="SUPFAM" id="SSF49417">
    <property type="entry name" value="p53-like transcription factors"/>
    <property type="match status" value="1"/>
</dbReference>
<dbReference type="SUPFAM" id="SSF55550">
    <property type="entry name" value="SH2 domain"/>
    <property type="match status" value="1"/>
</dbReference>
<dbReference type="SUPFAM" id="SSF47655">
    <property type="entry name" value="STAT"/>
    <property type="match status" value="1"/>
</dbReference>
<dbReference type="SUPFAM" id="SSF48092">
    <property type="entry name" value="Transcription factor STAT-4 N-domain"/>
    <property type="match status" value="1"/>
</dbReference>
<dbReference type="PROSITE" id="PS50001">
    <property type="entry name" value="SH2"/>
    <property type="match status" value="1"/>
</dbReference>
<reference key="1">
    <citation type="journal article" date="1995" name="EMBO J.">
        <title>Interleukin-3, granulocyte-macrophage colony stimulating factor and interleukin-5 transduce signals through two STAT5 homologs.</title>
        <authorList>
            <person name="Mui A.L.-F."/>
            <person name="Wakao H."/>
            <person name="O'Farrell A.-M."/>
            <person name="Harada N."/>
            <person name="Miyajima A."/>
        </authorList>
    </citation>
    <scope>NUCLEOTIDE SEQUENCE [MRNA]</scope>
    <scope>FUNCTION</scope>
    <scope>PHOSPHORYLATION</scope>
    <source>
        <strain>C57BL/6 X A/J</strain>
        <tissue>Liver</tissue>
    </source>
</reference>
<reference key="2">
    <citation type="journal article" date="1995" name="Proc. Natl. Acad. Sci. U.S.A.">
        <title>Cloning and expression of Stat5 and an additional homologue (Stat5b) involved in prolactin signal transduction in mouse mammary tissue.</title>
        <authorList>
            <person name="Liu X."/>
            <person name="Robinson G.W."/>
            <person name="Gouilleux F."/>
            <person name="Groner B."/>
            <person name="Hennighausen L."/>
        </authorList>
    </citation>
    <scope>NUCLEOTIDE SEQUENCE [MRNA]</scope>
    <source>
        <strain>C57BL/6J</strain>
    </source>
</reference>
<reference key="3">
    <citation type="submission" date="1995-09" db="EMBL/GenBank/DDBJ databases">
        <authorList>
            <person name="Zhou L.X."/>
            <person name="Moore R.C."/>
            <person name="Oka T."/>
        </authorList>
    </citation>
    <scope>NUCLEOTIDE SEQUENCE [MRNA]</scope>
    <source>
        <strain>C3H/HeN</strain>
        <tissue>Mammary gland</tissue>
    </source>
</reference>
<reference key="4">
    <citation type="journal article" date="1998" name="Mol. Cell. Biol.">
        <title>Characterization of Stat5a and Stat5b homodimers and heterodimers and their association with the glucocortiocoid receptor in mammary cells.</title>
        <authorList>
            <person name="Cella N."/>
            <person name="Groner B."/>
            <person name="Hynes N.E."/>
        </authorList>
    </citation>
    <scope>INTERACTION WITH NR3C1</scope>
</reference>
<reference key="5">
    <citation type="journal article" date="1999" name="J. Cell Biol.">
        <title>ErbB4 signaling in the mammary gland is required for lobuloalveolar development and Stat5 activation during lactation.</title>
        <authorList>
            <person name="Jones F.E."/>
            <person name="Welte T."/>
            <person name="Fu X.Y."/>
            <person name="Stern D.F."/>
        </authorList>
    </citation>
    <scope>FUNCTION</scope>
    <scope>INTERACTION WITH ERBB4</scope>
</reference>
<reference key="6">
    <citation type="journal article" date="2000" name="Blood">
        <title>Flt3 mutations from patients with acute myeloid leukemia induce transformation of 32D cells mediated by the Ras and STAT5 pathways.</title>
        <authorList>
            <person name="Mizuki M."/>
            <person name="Fenski R."/>
            <person name="Halfter H."/>
            <person name="Matsumura I."/>
            <person name="Schmidt R."/>
            <person name="Muller C."/>
            <person name="Gruning W."/>
            <person name="Kratz-Albers K."/>
            <person name="Serve S."/>
            <person name="Steur C."/>
            <person name="Buchner T."/>
            <person name="Kienast J."/>
            <person name="Kanakura Y."/>
            <person name="Berdel W.E."/>
            <person name="Serve H."/>
        </authorList>
    </citation>
    <scope>PHOSPHORYLATION IN RESPONSE TO FLT3 SIGNALING</scope>
</reference>
<reference key="7">
    <citation type="journal article" date="2006" name="Mol. Biol. Cell">
        <title>The intracellular domain of ErbB4 induces differentiation of mammary epithelial cells.</title>
        <authorList>
            <person name="Muraoka-Cook R.S."/>
            <person name="Sandahl M."/>
            <person name="Husted C."/>
            <person name="Hunter D."/>
            <person name="Miraglia L."/>
            <person name="Feng S.M."/>
            <person name="Elenius K."/>
            <person name="Earp H.S. III"/>
        </authorList>
    </citation>
    <scope>FUNCTION</scope>
    <scope>PHOSPHORYLATION</scope>
    <scope>SUBCELLULAR LOCATION</scope>
    <scope>INTERACTION WITH ERBB4</scope>
</reference>
<reference key="8">
    <citation type="journal article" date="2010" name="Mol. Cell. Biol.">
        <title>CD69 association with Jak3/Stat5 proteins regulates Th17 cell differentiation.</title>
        <authorList>
            <person name="Martin P."/>
            <person name="Gomez M."/>
            <person name="Lamana A."/>
            <person name="Cruz-Adalia A."/>
            <person name="Ramirez-Huesca M."/>
            <person name="Ursa M.A."/>
            <person name="Yanez-Mo M."/>
            <person name="Sanchez-Madrid F."/>
        </authorList>
    </citation>
    <scope>INTERACTION WITH CD69</scope>
</reference>
<reference key="9">
    <citation type="journal article" date="2010" name="Cell">
        <title>A tissue-specific atlas of mouse protein phosphorylation and expression.</title>
        <authorList>
            <person name="Huttlin E.L."/>
            <person name="Jedrychowski M.P."/>
            <person name="Elias J.E."/>
            <person name="Goswami T."/>
            <person name="Rad R."/>
            <person name="Beausoleil S.A."/>
            <person name="Villen J."/>
            <person name="Haas W."/>
            <person name="Sowa M.E."/>
            <person name="Gygi S.P."/>
        </authorList>
    </citation>
    <scope>PHOSPHORYLATION [LARGE SCALE ANALYSIS] AT TYR-694</scope>
    <scope>IDENTIFICATION BY MASS SPECTROMETRY [LARGE SCALE ANALYSIS]</scope>
    <source>
        <tissue>Brown adipose tissue</tissue>
        <tissue>Heart</tissue>
        <tissue>Kidney</tissue>
        <tissue>Liver</tissue>
        <tissue>Lung</tissue>
        <tissue>Pancreas</tissue>
        <tissue>Spleen</tissue>
    </source>
</reference>
<reference key="10">
    <citation type="journal article" date="2011" name="J. Biol. Chem.">
        <title>Mechanisms of STAT protein activation by oncogenic KIT mutants in neoplastic mast cells.</title>
        <authorList>
            <person name="Chaix A."/>
            <person name="Lopez S."/>
            <person name="Voisset E."/>
            <person name="Gros L."/>
            <person name="Dubreuil P."/>
            <person name="De Sepulveda P."/>
        </authorList>
    </citation>
    <scope>PHOSPHORYLATION IN RESPONSE TO KIT SIGNALING</scope>
</reference>
<reference key="11">
    <citation type="journal article" date="2011" name="J. Biol. Chem.">
        <title>Protein-tyrosine phosphatase DEP-1 controls receptor tyrosine kinase FLT3 signaling.</title>
        <authorList>
            <person name="Arora D."/>
            <person name="Stopp S."/>
            <person name="Bohmer S.A."/>
            <person name="Schons J."/>
            <person name="Godfrey R."/>
            <person name="Masson K."/>
            <person name="Razumovskaya E."/>
            <person name="Ronnstrand L."/>
            <person name="Tanzer S."/>
            <person name="Bauer R."/>
            <person name="Bohmer F.D."/>
            <person name="Muller J.P."/>
        </authorList>
    </citation>
    <scope>PHOSPHORYLATION IN RESPONSE TO FLT3 SIGNALING</scope>
</reference>
<reference key="12">
    <citation type="journal article" date="2011" name="PLoS ONE">
        <title>ISG15 modulates development of the erythroid lineage.</title>
        <authorList>
            <person name="Maragno A.L."/>
            <person name="Pironin M."/>
            <person name="Alcalde H."/>
            <person name="Cong X."/>
            <person name="Knobeloch K.P."/>
            <person name="Tangy F."/>
            <person name="Zhang D.E."/>
            <person name="Ghysdael J."/>
            <person name="Quang C.T."/>
        </authorList>
    </citation>
    <scope>ISGYLATION</scope>
</reference>
<reference key="13">
    <citation type="journal article" date="2005" name="J. Biol. Chem.">
        <title>Structure of the unphosphorylated STAT5a dimer.</title>
        <authorList>
            <person name="Neculai D."/>
            <person name="Neculai A.M."/>
            <person name="Verrier S."/>
            <person name="Straub K."/>
            <person name="Klumpp K."/>
            <person name="Pfitzner E."/>
            <person name="Becker S."/>
        </authorList>
    </citation>
    <scope>X-RAY CRYSTALLOGRAPHY (3.21 ANGSTROMS) OF 128-712</scope>
</reference>
<gene>
    <name type="primary">Stat5a</name>
    <name type="synonym">Mgf</name>
    <name type="synonym">Mpf</name>
</gene>
<feature type="chain" id="PRO_0000182424" description="Signal transducer and activator of transcription 5A">
    <location>
        <begin position="1"/>
        <end position="793"/>
    </location>
</feature>
<feature type="domain" description="SH2" evidence="5">
    <location>
        <begin position="589"/>
        <end position="686"/>
    </location>
</feature>
<feature type="modified residue" description="Phosphotyrosine" evidence="3">
    <location>
        <position position="90"/>
    </location>
</feature>
<feature type="modified residue" description="Phosphoserine" evidence="3">
    <location>
        <position position="128"/>
    </location>
</feature>
<feature type="modified residue" description="Phosphotyrosine" evidence="3">
    <location>
        <position position="682"/>
    </location>
</feature>
<feature type="modified residue" description="Phosphotyrosine" evidence="16">
    <location>
        <position position="694"/>
    </location>
</feature>
<feature type="modified residue" description="Phosphoserine" evidence="3">
    <location>
        <position position="779"/>
    </location>
</feature>
<feature type="helix" evidence="17">
    <location>
        <begin position="144"/>
        <end position="181"/>
    </location>
</feature>
<feature type="turn" evidence="17">
    <location>
        <begin position="182"/>
        <end position="190"/>
    </location>
</feature>
<feature type="turn" evidence="17">
    <location>
        <begin position="196"/>
        <end position="198"/>
    </location>
</feature>
<feature type="helix" evidence="17">
    <location>
        <begin position="199"/>
        <end position="249"/>
    </location>
</feature>
<feature type="helix" evidence="17">
    <location>
        <begin position="251"/>
        <end position="262"/>
    </location>
</feature>
<feature type="turn" evidence="17">
    <location>
        <begin position="263"/>
        <end position="265"/>
    </location>
</feature>
<feature type="helix" evidence="17">
    <location>
        <begin position="273"/>
        <end position="300"/>
    </location>
</feature>
<feature type="helix" evidence="17">
    <location>
        <begin position="309"/>
        <end position="330"/>
    </location>
</feature>
<feature type="strand" evidence="17">
    <location>
        <begin position="332"/>
        <end position="336"/>
    </location>
</feature>
<feature type="strand" evidence="17">
    <location>
        <begin position="340"/>
        <end position="345"/>
    </location>
</feature>
<feature type="strand" evidence="17">
    <location>
        <begin position="348"/>
        <end position="355"/>
    </location>
</feature>
<feature type="turn" evidence="17">
    <location>
        <begin position="356"/>
        <end position="361"/>
    </location>
</feature>
<feature type="strand" evidence="17">
    <location>
        <begin position="368"/>
        <end position="375"/>
    </location>
</feature>
<feature type="helix" evidence="17">
    <location>
        <begin position="376"/>
        <end position="383"/>
    </location>
</feature>
<feature type="strand" evidence="17">
    <location>
        <begin position="404"/>
        <end position="406"/>
    </location>
</feature>
<feature type="turn" evidence="17">
    <location>
        <begin position="407"/>
        <end position="410"/>
    </location>
</feature>
<feature type="strand" evidence="17">
    <location>
        <begin position="411"/>
        <end position="413"/>
    </location>
</feature>
<feature type="strand" evidence="17">
    <location>
        <begin position="415"/>
        <end position="419"/>
    </location>
</feature>
<feature type="helix" evidence="17">
    <location>
        <begin position="435"/>
        <end position="437"/>
    </location>
</feature>
<feature type="strand" evidence="17">
    <location>
        <begin position="439"/>
        <end position="449"/>
    </location>
</feature>
<feature type="strand" evidence="17">
    <location>
        <begin position="451"/>
        <end position="454"/>
    </location>
</feature>
<feature type="strand" evidence="17">
    <location>
        <begin position="456"/>
        <end position="462"/>
    </location>
</feature>
<feature type="strand" evidence="17">
    <location>
        <begin position="466"/>
        <end position="469"/>
    </location>
</feature>
<feature type="helix" evidence="17">
    <location>
        <begin position="475"/>
        <end position="488"/>
    </location>
</feature>
<feature type="strand" evidence="17">
    <location>
        <begin position="500"/>
        <end position="503"/>
    </location>
</feature>
<feature type="helix" evidence="17">
    <location>
        <begin position="504"/>
        <end position="519"/>
    </location>
</feature>
<feature type="helix" evidence="17">
    <location>
        <begin position="527"/>
        <end position="538"/>
    </location>
</feature>
<feature type="helix" evidence="17">
    <location>
        <begin position="545"/>
        <end position="550"/>
    </location>
</feature>
<feature type="strand" evidence="17">
    <location>
        <begin position="552"/>
        <end position="554"/>
    </location>
</feature>
<feature type="helix" evidence="17">
    <location>
        <begin position="555"/>
        <end position="559"/>
    </location>
</feature>
<feature type="strand" evidence="17">
    <location>
        <begin position="566"/>
        <end position="569"/>
    </location>
</feature>
<feature type="helix" evidence="17">
    <location>
        <begin position="570"/>
        <end position="584"/>
    </location>
</feature>
<feature type="helix" evidence="17">
    <location>
        <begin position="586"/>
        <end position="591"/>
    </location>
</feature>
<feature type="helix" evidence="17">
    <location>
        <begin position="600"/>
        <end position="608"/>
    </location>
</feature>
<feature type="strand" evidence="17">
    <location>
        <begin position="615"/>
        <end position="620"/>
    </location>
</feature>
<feature type="strand" evidence="17">
    <location>
        <begin position="626"/>
        <end position="631"/>
    </location>
</feature>
<feature type="strand" evidence="17">
    <location>
        <begin position="641"/>
        <end position="646"/>
    </location>
</feature>
<feature type="helix" evidence="17">
    <location>
        <begin position="648"/>
        <end position="653"/>
    </location>
</feature>
<feature type="helix" evidence="17">
    <location>
        <begin position="656"/>
        <end position="662"/>
    </location>
</feature>
<feature type="helix" evidence="17">
    <location>
        <begin position="675"/>
        <end position="679"/>
    </location>
</feature>
<feature type="turn" evidence="17">
    <location>
        <begin position="680"/>
        <end position="682"/>
    </location>
</feature>
<proteinExistence type="evidence at protein level"/>